<organism>
    <name type="scientific">Kineococcus radiotolerans (strain ATCC BAA-149 / DSM 14245 / SRS30216)</name>
    <dbReference type="NCBI Taxonomy" id="266940"/>
    <lineage>
        <taxon>Bacteria</taxon>
        <taxon>Bacillati</taxon>
        <taxon>Actinomycetota</taxon>
        <taxon>Actinomycetes</taxon>
        <taxon>Kineosporiales</taxon>
        <taxon>Kineosporiaceae</taxon>
        <taxon>Kineococcus</taxon>
    </lineage>
</organism>
<evidence type="ECO:0000255" key="1">
    <source>
        <dbReference type="HAMAP-Rule" id="MF_00074"/>
    </source>
</evidence>
<evidence type="ECO:0000256" key="2">
    <source>
        <dbReference type="SAM" id="MobiDB-lite"/>
    </source>
</evidence>
<protein>
    <recommendedName>
        <fullName evidence="1">Ribosomal RNA small subunit methyltransferase G</fullName>
        <ecNumber evidence="1">2.1.1.-</ecNumber>
    </recommendedName>
    <alternativeName>
        <fullName evidence="1">16S rRNA 7-methylguanosine methyltransferase</fullName>
        <shortName evidence="1">16S rRNA m7G methyltransferase</shortName>
    </alternativeName>
</protein>
<keyword id="KW-0963">Cytoplasm</keyword>
<keyword id="KW-0489">Methyltransferase</keyword>
<keyword id="KW-1185">Reference proteome</keyword>
<keyword id="KW-0698">rRNA processing</keyword>
<keyword id="KW-0949">S-adenosyl-L-methionine</keyword>
<keyword id="KW-0808">Transferase</keyword>
<reference key="1">
    <citation type="journal article" date="2008" name="PLoS ONE">
        <title>Survival in nuclear waste, extreme resistance, and potential applications gleaned from the genome sequence of Kineococcus radiotolerans SRS30216.</title>
        <authorList>
            <person name="Bagwell C.E."/>
            <person name="Bhat S."/>
            <person name="Hawkins G.M."/>
            <person name="Smith B.W."/>
            <person name="Biswas T."/>
            <person name="Hoover T.R."/>
            <person name="Saunders E."/>
            <person name="Han C.S."/>
            <person name="Tsodikov O.V."/>
            <person name="Shimkets L.J."/>
        </authorList>
    </citation>
    <scope>NUCLEOTIDE SEQUENCE [LARGE SCALE GENOMIC DNA]</scope>
    <source>
        <strain>ATCC BAA-149 / DSM 14245 / SRS30216</strain>
    </source>
</reference>
<sequence>MPEGDGVPRETPSPSVVPESPVEVPVEAVARVFGDRADRAATYRELLATAGVERGLIGPREVPRLWDRHLLNCAYLGEVIDQGSSVIDLGSGAGLPGIPLALARPDLQIRLVEPLERRYTFLREAITELGLRDQVAVARGRAEDVRGEFSASVVTARAVAPLKTLYGWALPLVVTGGHLVAIKGRSASDEIAAAGETLRQMGVTAAPEVLSVGPDDGTGTTVVRVARGHGPLRAATAPAPPGAAKRRPGKGNRR</sequence>
<proteinExistence type="inferred from homology"/>
<comment type="function">
    <text evidence="1">Specifically methylates the N7 position of guanine in position 518 of 16S rRNA.</text>
</comment>
<comment type="subcellular location">
    <subcellularLocation>
        <location evidence="1">Cytoplasm</location>
    </subcellularLocation>
</comment>
<comment type="similarity">
    <text evidence="1">Belongs to the methyltransferase superfamily. RNA methyltransferase RsmG family.</text>
</comment>
<name>RSMG_KINRD</name>
<feature type="chain" id="PRO_0000335366" description="Ribosomal RNA small subunit methyltransferase G">
    <location>
        <begin position="1"/>
        <end position="254"/>
    </location>
</feature>
<feature type="region of interest" description="Disordered" evidence="2">
    <location>
        <begin position="1"/>
        <end position="21"/>
    </location>
</feature>
<feature type="region of interest" description="Disordered" evidence="2">
    <location>
        <begin position="230"/>
        <end position="254"/>
    </location>
</feature>
<feature type="compositionally biased region" description="Low complexity" evidence="2">
    <location>
        <begin position="9"/>
        <end position="21"/>
    </location>
</feature>
<feature type="compositionally biased region" description="Basic residues" evidence="2">
    <location>
        <begin position="244"/>
        <end position="254"/>
    </location>
</feature>
<feature type="binding site" evidence="1">
    <location>
        <position position="90"/>
    </location>
    <ligand>
        <name>S-adenosyl-L-methionine</name>
        <dbReference type="ChEBI" id="CHEBI:59789"/>
    </ligand>
</feature>
<feature type="binding site" evidence="1">
    <location>
        <position position="95"/>
    </location>
    <ligand>
        <name>S-adenosyl-L-methionine</name>
        <dbReference type="ChEBI" id="CHEBI:59789"/>
    </ligand>
</feature>
<feature type="binding site" evidence="1">
    <location>
        <begin position="142"/>
        <end position="143"/>
    </location>
    <ligand>
        <name>S-adenosyl-L-methionine</name>
        <dbReference type="ChEBI" id="CHEBI:59789"/>
    </ligand>
</feature>
<feature type="binding site" evidence="1">
    <location>
        <position position="157"/>
    </location>
    <ligand>
        <name>S-adenosyl-L-methionine</name>
        <dbReference type="ChEBI" id="CHEBI:59789"/>
    </ligand>
</feature>
<dbReference type="EC" id="2.1.1.-" evidence="1"/>
<dbReference type="EMBL" id="CP000750">
    <property type="protein sequence ID" value="ABS05967.1"/>
    <property type="molecule type" value="Genomic_DNA"/>
</dbReference>
<dbReference type="SMR" id="A6WGM8"/>
<dbReference type="STRING" id="266940.Krad_4508"/>
<dbReference type="KEGG" id="kra:Krad_4508"/>
<dbReference type="eggNOG" id="COG0357">
    <property type="taxonomic scope" value="Bacteria"/>
</dbReference>
<dbReference type="HOGENOM" id="CLU_065341_5_0_11"/>
<dbReference type="OrthoDB" id="9808773at2"/>
<dbReference type="Proteomes" id="UP000001116">
    <property type="component" value="Chromosome"/>
</dbReference>
<dbReference type="GO" id="GO:0005829">
    <property type="term" value="C:cytosol"/>
    <property type="evidence" value="ECO:0007669"/>
    <property type="project" value="TreeGrafter"/>
</dbReference>
<dbReference type="GO" id="GO:0070043">
    <property type="term" value="F:rRNA (guanine-N7-)-methyltransferase activity"/>
    <property type="evidence" value="ECO:0007669"/>
    <property type="project" value="UniProtKB-UniRule"/>
</dbReference>
<dbReference type="Gene3D" id="3.40.50.150">
    <property type="entry name" value="Vaccinia Virus protein VP39"/>
    <property type="match status" value="1"/>
</dbReference>
<dbReference type="HAMAP" id="MF_00074">
    <property type="entry name" value="16SrRNA_methyltr_G"/>
    <property type="match status" value="1"/>
</dbReference>
<dbReference type="InterPro" id="IPR003682">
    <property type="entry name" value="rRNA_ssu_MeTfrase_G"/>
</dbReference>
<dbReference type="InterPro" id="IPR029063">
    <property type="entry name" value="SAM-dependent_MTases_sf"/>
</dbReference>
<dbReference type="NCBIfam" id="TIGR00138">
    <property type="entry name" value="rsmG_gidB"/>
    <property type="match status" value="1"/>
</dbReference>
<dbReference type="PANTHER" id="PTHR31760">
    <property type="entry name" value="S-ADENOSYL-L-METHIONINE-DEPENDENT METHYLTRANSFERASES SUPERFAMILY PROTEIN"/>
    <property type="match status" value="1"/>
</dbReference>
<dbReference type="PANTHER" id="PTHR31760:SF0">
    <property type="entry name" value="S-ADENOSYL-L-METHIONINE-DEPENDENT METHYLTRANSFERASES SUPERFAMILY PROTEIN"/>
    <property type="match status" value="1"/>
</dbReference>
<dbReference type="Pfam" id="PF02527">
    <property type="entry name" value="GidB"/>
    <property type="match status" value="1"/>
</dbReference>
<dbReference type="SUPFAM" id="SSF53335">
    <property type="entry name" value="S-adenosyl-L-methionine-dependent methyltransferases"/>
    <property type="match status" value="1"/>
</dbReference>
<gene>
    <name evidence="1" type="primary">rsmG</name>
    <name type="ordered locus">Krad_4508</name>
</gene>
<accession>A6WGM8</accession>